<evidence type="ECO:0000255" key="1">
    <source>
        <dbReference type="HAMAP-Rule" id="MF_00102"/>
    </source>
</evidence>
<evidence type="ECO:0000305" key="2"/>
<protein>
    <recommendedName>
        <fullName evidence="1">4-hydroxy-tetrahydrodipicolinate reductase</fullName>
        <shortName evidence="1">HTPA reductase</shortName>
        <ecNumber evidence="1">1.17.1.8</ecNumber>
    </recommendedName>
</protein>
<comment type="function">
    <text evidence="1">Catalyzes the conversion of 4-hydroxy-tetrahydrodipicolinate (HTPA) to tetrahydrodipicolinate.</text>
</comment>
<comment type="catalytic activity">
    <reaction evidence="1">
        <text>(S)-2,3,4,5-tetrahydrodipicolinate + NAD(+) + H2O = (2S,4S)-4-hydroxy-2,3,4,5-tetrahydrodipicolinate + NADH + H(+)</text>
        <dbReference type="Rhea" id="RHEA:35323"/>
        <dbReference type="ChEBI" id="CHEBI:15377"/>
        <dbReference type="ChEBI" id="CHEBI:15378"/>
        <dbReference type="ChEBI" id="CHEBI:16845"/>
        <dbReference type="ChEBI" id="CHEBI:57540"/>
        <dbReference type="ChEBI" id="CHEBI:57945"/>
        <dbReference type="ChEBI" id="CHEBI:67139"/>
        <dbReference type="EC" id="1.17.1.8"/>
    </reaction>
</comment>
<comment type="catalytic activity">
    <reaction evidence="1">
        <text>(S)-2,3,4,5-tetrahydrodipicolinate + NADP(+) + H2O = (2S,4S)-4-hydroxy-2,3,4,5-tetrahydrodipicolinate + NADPH + H(+)</text>
        <dbReference type="Rhea" id="RHEA:35331"/>
        <dbReference type="ChEBI" id="CHEBI:15377"/>
        <dbReference type="ChEBI" id="CHEBI:15378"/>
        <dbReference type="ChEBI" id="CHEBI:16845"/>
        <dbReference type="ChEBI" id="CHEBI:57783"/>
        <dbReference type="ChEBI" id="CHEBI:58349"/>
        <dbReference type="ChEBI" id="CHEBI:67139"/>
        <dbReference type="EC" id="1.17.1.8"/>
    </reaction>
</comment>
<comment type="pathway">
    <text evidence="1">Amino-acid biosynthesis; L-lysine biosynthesis via DAP pathway; (S)-tetrahydrodipicolinate from L-aspartate: step 4/4.</text>
</comment>
<comment type="subunit">
    <text evidence="1">Homotetramer.</text>
</comment>
<comment type="subcellular location">
    <subcellularLocation>
        <location evidence="1">Cytoplasm</location>
    </subcellularLocation>
</comment>
<comment type="similarity">
    <text evidence="1">Belongs to the DapB family.</text>
</comment>
<comment type="caution">
    <text evidence="2">Was originally thought to be a dihydrodipicolinate reductase (DHDPR), catalyzing the conversion of dihydrodipicolinate to tetrahydrodipicolinate. However, it was shown in E.coli that the substrate of the enzymatic reaction is not dihydrodipicolinate (DHDP) but in fact (2S,4S)-4-hydroxy-2,3,4,5-tetrahydrodipicolinic acid (HTPA), the product released by the DapA-catalyzed reaction.</text>
</comment>
<keyword id="KW-0028">Amino-acid biosynthesis</keyword>
<keyword id="KW-0963">Cytoplasm</keyword>
<keyword id="KW-0220">Diaminopimelate biosynthesis</keyword>
<keyword id="KW-0457">Lysine biosynthesis</keyword>
<keyword id="KW-0520">NAD</keyword>
<keyword id="KW-0521">NADP</keyword>
<keyword id="KW-0560">Oxidoreductase</keyword>
<organism>
    <name type="scientific">Serratia proteamaculans (strain 568)</name>
    <dbReference type="NCBI Taxonomy" id="399741"/>
    <lineage>
        <taxon>Bacteria</taxon>
        <taxon>Pseudomonadati</taxon>
        <taxon>Pseudomonadota</taxon>
        <taxon>Gammaproteobacteria</taxon>
        <taxon>Enterobacterales</taxon>
        <taxon>Yersiniaceae</taxon>
        <taxon>Serratia</taxon>
    </lineage>
</organism>
<reference key="1">
    <citation type="submission" date="2007-09" db="EMBL/GenBank/DDBJ databases">
        <title>Complete sequence of chromosome of Serratia proteamaculans 568.</title>
        <authorList>
            <consortium name="US DOE Joint Genome Institute"/>
            <person name="Copeland A."/>
            <person name="Lucas S."/>
            <person name="Lapidus A."/>
            <person name="Barry K."/>
            <person name="Glavina del Rio T."/>
            <person name="Dalin E."/>
            <person name="Tice H."/>
            <person name="Pitluck S."/>
            <person name="Chain P."/>
            <person name="Malfatti S."/>
            <person name="Shin M."/>
            <person name="Vergez L."/>
            <person name="Schmutz J."/>
            <person name="Larimer F."/>
            <person name="Land M."/>
            <person name="Hauser L."/>
            <person name="Kyrpides N."/>
            <person name="Kim E."/>
            <person name="Taghavi S."/>
            <person name="Newman L."/>
            <person name="Vangronsveld J."/>
            <person name="van der Lelie D."/>
            <person name="Richardson P."/>
        </authorList>
    </citation>
    <scope>NUCLEOTIDE SEQUENCE [LARGE SCALE GENOMIC DNA]</scope>
    <source>
        <strain>568</strain>
    </source>
</reference>
<sequence length="273" mass="28737">MTDSLIRIAVAGSGGRMGRQLIQAVQQAPGVVLGAAISRPGSSLIGTDAGELAGVGALGVTVSDSLEKVVDDFDILIDFTRPESTLAYLAFCVEHKKAMVIGTTGFDDAGKDAIRAAGQQIGIVFAANFSVGVNLVLKLLEKAAQVMGDYTDIEIIEAHHRHKVDAPSGTALAMGEAIAGALGRDLKECAVYAREGYTGERDPKSIGFATVRAGDIVGEHTAMFADIGERVEITHKASSRMTFASGAVRAASWLHNHDKGLFDMRDVLNLDQL</sequence>
<accession>A8G9M8</accession>
<proteinExistence type="inferred from homology"/>
<feature type="chain" id="PRO_1000057688" description="4-hydroxy-tetrahydrodipicolinate reductase">
    <location>
        <begin position="1"/>
        <end position="273"/>
    </location>
</feature>
<feature type="active site" description="Proton donor/acceptor" evidence="1">
    <location>
        <position position="159"/>
    </location>
</feature>
<feature type="active site" description="Proton donor" evidence="1">
    <location>
        <position position="163"/>
    </location>
</feature>
<feature type="binding site" evidence="1">
    <location>
        <begin position="12"/>
        <end position="17"/>
    </location>
    <ligand>
        <name>NAD(+)</name>
        <dbReference type="ChEBI" id="CHEBI:57540"/>
    </ligand>
</feature>
<feature type="binding site" evidence="1">
    <location>
        <position position="39"/>
    </location>
    <ligand>
        <name>NADP(+)</name>
        <dbReference type="ChEBI" id="CHEBI:58349"/>
    </ligand>
</feature>
<feature type="binding site" evidence="1">
    <location>
        <begin position="102"/>
        <end position="104"/>
    </location>
    <ligand>
        <name>NAD(+)</name>
        <dbReference type="ChEBI" id="CHEBI:57540"/>
    </ligand>
</feature>
<feature type="binding site" evidence="1">
    <location>
        <begin position="126"/>
        <end position="129"/>
    </location>
    <ligand>
        <name>NAD(+)</name>
        <dbReference type="ChEBI" id="CHEBI:57540"/>
    </ligand>
</feature>
<feature type="binding site" evidence="1">
    <location>
        <position position="160"/>
    </location>
    <ligand>
        <name>(S)-2,3,4,5-tetrahydrodipicolinate</name>
        <dbReference type="ChEBI" id="CHEBI:16845"/>
    </ligand>
</feature>
<feature type="binding site" evidence="1">
    <location>
        <begin position="169"/>
        <end position="170"/>
    </location>
    <ligand>
        <name>(S)-2,3,4,5-tetrahydrodipicolinate</name>
        <dbReference type="ChEBI" id="CHEBI:16845"/>
    </ligand>
</feature>
<dbReference type="EC" id="1.17.1.8" evidence="1"/>
<dbReference type="EMBL" id="CP000826">
    <property type="protein sequence ID" value="ABV39818.1"/>
    <property type="molecule type" value="Genomic_DNA"/>
</dbReference>
<dbReference type="SMR" id="A8G9M8"/>
<dbReference type="STRING" id="399741.Spro_0712"/>
<dbReference type="KEGG" id="spe:Spro_0712"/>
<dbReference type="eggNOG" id="COG0289">
    <property type="taxonomic scope" value="Bacteria"/>
</dbReference>
<dbReference type="HOGENOM" id="CLU_047479_2_1_6"/>
<dbReference type="OrthoDB" id="9790352at2"/>
<dbReference type="UniPathway" id="UPA00034">
    <property type="reaction ID" value="UER00018"/>
</dbReference>
<dbReference type="GO" id="GO:0005829">
    <property type="term" value="C:cytosol"/>
    <property type="evidence" value="ECO:0007669"/>
    <property type="project" value="TreeGrafter"/>
</dbReference>
<dbReference type="GO" id="GO:0008839">
    <property type="term" value="F:4-hydroxy-tetrahydrodipicolinate reductase"/>
    <property type="evidence" value="ECO:0007669"/>
    <property type="project" value="UniProtKB-EC"/>
</dbReference>
<dbReference type="GO" id="GO:0051287">
    <property type="term" value="F:NAD binding"/>
    <property type="evidence" value="ECO:0007669"/>
    <property type="project" value="UniProtKB-UniRule"/>
</dbReference>
<dbReference type="GO" id="GO:0050661">
    <property type="term" value="F:NADP binding"/>
    <property type="evidence" value="ECO:0007669"/>
    <property type="project" value="UniProtKB-UniRule"/>
</dbReference>
<dbReference type="GO" id="GO:0016726">
    <property type="term" value="F:oxidoreductase activity, acting on CH or CH2 groups, NAD or NADP as acceptor"/>
    <property type="evidence" value="ECO:0007669"/>
    <property type="project" value="UniProtKB-UniRule"/>
</dbReference>
<dbReference type="GO" id="GO:0019877">
    <property type="term" value="P:diaminopimelate biosynthetic process"/>
    <property type="evidence" value="ECO:0007669"/>
    <property type="project" value="UniProtKB-UniRule"/>
</dbReference>
<dbReference type="GO" id="GO:0009089">
    <property type="term" value="P:lysine biosynthetic process via diaminopimelate"/>
    <property type="evidence" value="ECO:0007669"/>
    <property type="project" value="UniProtKB-UniRule"/>
</dbReference>
<dbReference type="CDD" id="cd02274">
    <property type="entry name" value="DHDPR_N"/>
    <property type="match status" value="1"/>
</dbReference>
<dbReference type="FunFam" id="3.30.360.10:FF:000004">
    <property type="entry name" value="4-hydroxy-tetrahydrodipicolinate reductase"/>
    <property type="match status" value="1"/>
</dbReference>
<dbReference type="FunFam" id="3.40.50.720:FF:000048">
    <property type="entry name" value="4-hydroxy-tetrahydrodipicolinate reductase"/>
    <property type="match status" value="1"/>
</dbReference>
<dbReference type="Gene3D" id="3.30.360.10">
    <property type="entry name" value="Dihydrodipicolinate Reductase, domain 2"/>
    <property type="match status" value="1"/>
</dbReference>
<dbReference type="Gene3D" id="3.40.50.720">
    <property type="entry name" value="NAD(P)-binding Rossmann-like Domain"/>
    <property type="match status" value="1"/>
</dbReference>
<dbReference type="HAMAP" id="MF_00102">
    <property type="entry name" value="DapB"/>
    <property type="match status" value="1"/>
</dbReference>
<dbReference type="InterPro" id="IPR022663">
    <property type="entry name" value="DapB_C"/>
</dbReference>
<dbReference type="InterPro" id="IPR000846">
    <property type="entry name" value="DapB_N"/>
</dbReference>
<dbReference type="InterPro" id="IPR022664">
    <property type="entry name" value="DapB_N_CS"/>
</dbReference>
<dbReference type="InterPro" id="IPR023940">
    <property type="entry name" value="DHDPR_bac"/>
</dbReference>
<dbReference type="InterPro" id="IPR036291">
    <property type="entry name" value="NAD(P)-bd_dom_sf"/>
</dbReference>
<dbReference type="NCBIfam" id="TIGR00036">
    <property type="entry name" value="dapB"/>
    <property type="match status" value="1"/>
</dbReference>
<dbReference type="PANTHER" id="PTHR20836:SF0">
    <property type="entry name" value="4-HYDROXY-TETRAHYDRODIPICOLINATE REDUCTASE 1, CHLOROPLASTIC-RELATED"/>
    <property type="match status" value="1"/>
</dbReference>
<dbReference type="PANTHER" id="PTHR20836">
    <property type="entry name" value="DIHYDRODIPICOLINATE REDUCTASE"/>
    <property type="match status" value="1"/>
</dbReference>
<dbReference type="Pfam" id="PF05173">
    <property type="entry name" value="DapB_C"/>
    <property type="match status" value="1"/>
</dbReference>
<dbReference type="Pfam" id="PF01113">
    <property type="entry name" value="DapB_N"/>
    <property type="match status" value="1"/>
</dbReference>
<dbReference type="PIRSF" id="PIRSF000161">
    <property type="entry name" value="DHPR"/>
    <property type="match status" value="1"/>
</dbReference>
<dbReference type="SUPFAM" id="SSF55347">
    <property type="entry name" value="Glyceraldehyde-3-phosphate dehydrogenase-like, C-terminal domain"/>
    <property type="match status" value="1"/>
</dbReference>
<dbReference type="SUPFAM" id="SSF51735">
    <property type="entry name" value="NAD(P)-binding Rossmann-fold domains"/>
    <property type="match status" value="1"/>
</dbReference>
<dbReference type="PROSITE" id="PS01298">
    <property type="entry name" value="DAPB"/>
    <property type="match status" value="1"/>
</dbReference>
<name>DAPB_SERP5</name>
<gene>
    <name evidence="1" type="primary">dapB</name>
    <name type="ordered locus">Spro_0712</name>
</gene>